<keyword id="KW-0378">Hydrolase</keyword>
<keyword id="KW-0904">Protein phosphatase</keyword>
<keyword id="KW-1185">Reference proteome</keyword>
<gene>
    <name type="primary">CTDSPL2</name>
    <name type="ORF">RCJMB04_4a24</name>
</gene>
<sequence>MRLRTRKASQQSNPIHAQRAQRAKRKHSEVEESLPVGGGKPQKNETGLLSSIKKFIKGSTPKEERENPAKRSRIERDIDNNLITSTPQTGEKPNKQISRVRRKGQVNGEAGSYEMTNQHVKQNGKLEDNPATGSPPRTTLLGTIFSPVFNFFSPANKNGTSGSDSPGQAVEAEEIVKQLDMEQVDEITTSTATSTNGAAYTSQAVQVRSTVNNGLEEVEETNDRDLPPLTAPVSPDSGYSSAHAEATYEEDWEVFDPYYFIKHVPPLTEEQLNRKPALPLKTRSTPEFSLVLDLDETLVHCSLNELEDAALTFPVLFQDVIYQVYVRLRPFFREFLERMSQIYEIILFTASKKVYADKLLNILDPKKQLVRHRLFREHCVCVQGNYIKDLNILGRDLSKTIIIDNSPQAFAYQLSNGIPIESWFMDKNDNELLKLIPFLEKLVELNEDVRPHIRDRFRLHDLLPPD</sequence>
<reference key="1">
    <citation type="journal article" date="2005" name="Genome Biol.">
        <title>Full-length cDNAs from chicken bursal lymphocytes to facilitate gene function analysis.</title>
        <authorList>
            <person name="Caldwell R.B."/>
            <person name="Kierzek A.M."/>
            <person name="Arakawa H."/>
            <person name="Bezzubov Y."/>
            <person name="Zaim J."/>
            <person name="Fiedler P."/>
            <person name="Kutter S."/>
            <person name="Blagodatski A."/>
            <person name="Kostovska D."/>
            <person name="Koter M."/>
            <person name="Plachy J."/>
            <person name="Carninci P."/>
            <person name="Hayashizaki Y."/>
            <person name="Buerstedde J.-M."/>
        </authorList>
    </citation>
    <scope>NUCLEOTIDE SEQUENCE [LARGE SCALE MRNA]</scope>
    <source>
        <strain>CB</strain>
        <tissue>Bursa of Fabricius</tissue>
    </source>
</reference>
<organism>
    <name type="scientific">Gallus gallus</name>
    <name type="common">Chicken</name>
    <dbReference type="NCBI Taxonomy" id="9031"/>
    <lineage>
        <taxon>Eukaryota</taxon>
        <taxon>Metazoa</taxon>
        <taxon>Chordata</taxon>
        <taxon>Craniata</taxon>
        <taxon>Vertebrata</taxon>
        <taxon>Euteleostomi</taxon>
        <taxon>Archelosauria</taxon>
        <taxon>Archosauria</taxon>
        <taxon>Dinosauria</taxon>
        <taxon>Saurischia</taxon>
        <taxon>Theropoda</taxon>
        <taxon>Coelurosauria</taxon>
        <taxon>Aves</taxon>
        <taxon>Neognathae</taxon>
        <taxon>Galloanserae</taxon>
        <taxon>Galliformes</taxon>
        <taxon>Phasianidae</taxon>
        <taxon>Phasianinae</taxon>
        <taxon>Gallus</taxon>
    </lineage>
</organism>
<proteinExistence type="evidence at transcript level"/>
<feature type="chain" id="PRO_0000331467" description="CTD small phosphatase-like protein 2">
    <location>
        <begin position="1"/>
        <end position="466"/>
    </location>
</feature>
<feature type="domain" description="FCP1 homology" evidence="2">
    <location>
        <begin position="283"/>
        <end position="442"/>
    </location>
</feature>
<feature type="region of interest" description="Disordered" evidence="3">
    <location>
        <begin position="1"/>
        <end position="137"/>
    </location>
</feature>
<feature type="region of interest" description="Disordered" evidence="3">
    <location>
        <begin position="216"/>
        <end position="240"/>
    </location>
</feature>
<feature type="compositionally biased region" description="Basic and acidic residues" evidence="3">
    <location>
        <begin position="60"/>
        <end position="79"/>
    </location>
</feature>
<feature type="compositionally biased region" description="Polar residues" evidence="3">
    <location>
        <begin position="81"/>
        <end position="97"/>
    </location>
</feature>
<name>CTSL2_CHICK</name>
<accession>Q5F3Z7</accession>
<comment type="function">
    <text evidence="1">Probable phosphatase.</text>
</comment>
<comment type="similarity">
    <text evidence="4">Belongs to the CTDSPL2 family.</text>
</comment>
<comment type="sequence caution" evidence="4">
    <conflict type="erroneous initiation">
        <sequence resource="EMBL-CDS" id="CAH65137"/>
    </conflict>
</comment>
<protein>
    <recommendedName>
        <fullName>CTD small phosphatase-like protein 2</fullName>
        <shortName>CTDSP-like 2</shortName>
        <ecNumber>3.1.3.-</ecNumber>
    </recommendedName>
</protein>
<dbReference type="EC" id="3.1.3.-"/>
<dbReference type="EMBL" id="AJ851503">
    <property type="protein sequence ID" value="CAH65137.1"/>
    <property type="status" value="ALT_INIT"/>
    <property type="molecule type" value="mRNA"/>
</dbReference>
<dbReference type="RefSeq" id="NP_001012790.1">
    <property type="nucleotide sequence ID" value="NM_001012772.1"/>
</dbReference>
<dbReference type="RefSeq" id="XP_015147600.1">
    <property type="nucleotide sequence ID" value="XM_015292114.1"/>
</dbReference>
<dbReference type="RefSeq" id="XP_015147601.1">
    <property type="nucleotide sequence ID" value="XM_015292115.1"/>
</dbReference>
<dbReference type="SMR" id="Q5F3Z7"/>
<dbReference type="FunCoup" id="Q5F3Z7">
    <property type="interactions" value="1952"/>
</dbReference>
<dbReference type="STRING" id="9031.ENSGALP00000013337"/>
<dbReference type="PaxDb" id="9031-ENSGALP00000013337"/>
<dbReference type="GeneID" id="415574"/>
<dbReference type="KEGG" id="gga:415574"/>
<dbReference type="CTD" id="51496"/>
<dbReference type="VEuPathDB" id="HostDB:geneid_415574"/>
<dbReference type="eggNOG" id="KOG1605">
    <property type="taxonomic scope" value="Eukaryota"/>
</dbReference>
<dbReference type="HOGENOM" id="CLU_034042_4_0_1"/>
<dbReference type="InParanoid" id="Q5F3Z7"/>
<dbReference type="OrthoDB" id="277011at2759"/>
<dbReference type="PhylomeDB" id="Q5F3Z7"/>
<dbReference type="TreeFam" id="TF354278"/>
<dbReference type="PRO" id="PR:Q5F3Z7"/>
<dbReference type="Proteomes" id="UP000000539">
    <property type="component" value="Unassembled WGS sequence"/>
</dbReference>
<dbReference type="GO" id="GO:0004721">
    <property type="term" value="F:phosphoprotein phosphatase activity"/>
    <property type="evidence" value="ECO:0000318"/>
    <property type="project" value="GO_Central"/>
</dbReference>
<dbReference type="CDD" id="cd07521">
    <property type="entry name" value="HAD_FCP1-like"/>
    <property type="match status" value="1"/>
</dbReference>
<dbReference type="FunFam" id="3.40.50.1000:FF:000015">
    <property type="entry name" value="CTD small phosphatase-like protein 2"/>
    <property type="match status" value="1"/>
</dbReference>
<dbReference type="Gene3D" id="3.40.50.1000">
    <property type="entry name" value="HAD superfamily/HAD-like"/>
    <property type="match status" value="1"/>
</dbReference>
<dbReference type="InterPro" id="IPR011948">
    <property type="entry name" value="Dullard_phosphatase"/>
</dbReference>
<dbReference type="InterPro" id="IPR004274">
    <property type="entry name" value="FCP1_dom"/>
</dbReference>
<dbReference type="InterPro" id="IPR036412">
    <property type="entry name" value="HAD-like_sf"/>
</dbReference>
<dbReference type="InterPro" id="IPR023214">
    <property type="entry name" value="HAD_sf"/>
</dbReference>
<dbReference type="InterPro" id="IPR050365">
    <property type="entry name" value="TIM50"/>
</dbReference>
<dbReference type="NCBIfam" id="TIGR02251">
    <property type="entry name" value="HIF-SF_euk"/>
    <property type="match status" value="1"/>
</dbReference>
<dbReference type="PANTHER" id="PTHR12210">
    <property type="entry name" value="DULLARD PROTEIN PHOSPHATASE"/>
    <property type="match status" value="1"/>
</dbReference>
<dbReference type="Pfam" id="PF03031">
    <property type="entry name" value="NIF"/>
    <property type="match status" value="1"/>
</dbReference>
<dbReference type="SMART" id="SM00577">
    <property type="entry name" value="CPDc"/>
    <property type="match status" value="1"/>
</dbReference>
<dbReference type="SUPFAM" id="SSF56784">
    <property type="entry name" value="HAD-like"/>
    <property type="match status" value="1"/>
</dbReference>
<dbReference type="PROSITE" id="PS50969">
    <property type="entry name" value="FCP1"/>
    <property type="match status" value="1"/>
</dbReference>
<evidence type="ECO:0000250" key="1"/>
<evidence type="ECO:0000255" key="2">
    <source>
        <dbReference type="PROSITE-ProRule" id="PRU00336"/>
    </source>
</evidence>
<evidence type="ECO:0000256" key="3">
    <source>
        <dbReference type="SAM" id="MobiDB-lite"/>
    </source>
</evidence>
<evidence type="ECO:0000305" key="4"/>